<evidence type="ECO:0000250" key="1">
    <source>
        <dbReference type="UniProtKB" id="Q8R3Q2"/>
    </source>
</evidence>
<evidence type="ECO:0000256" key="2">
    <source>
        <dbReference type="SAM" id="MobiDB-lite"/>
    </source>
</evidence>
<evidence type="ECO:0000269" key="3">
    <source>
    </source>
</evidence>
<evidence type="ECO:0000269" key="4">
    <source>
    </source>
</evidence>
<evidence type="ECO:0000303" key="5">
    <source>
    </source>
</evidence>
<evidence type="ECO:0000303" key="6">
    <source>
    </source>
</evidence>
<evidence type="ECO:0000303" key="7">
    <source>
    </source>
</evidence>
<evidence type="ECO:0000305" key="8"/>
<evidence type="ECO:0007744" key="9">
    <source>
    </source>
</evidence>
<evidence type="ECO:0007744" key="10">
    <source>
    </source>
</evidence>
<evidence type="ECO:0007744" key="11">
    <source>
    </source>
</evidence>
<evidence type="ECO:0007744" key="12">
    <source>
    </source>
</evidence>
<gene>
    <name type="primary">PPP6R2</name>
    <name type="synonym">KIAA0685</name>
    <name type="synonym">PP6R2</name>
    <name type="synonym">SAPS2</name>
</gene>
<proteinExistence type="evidence at protein level"/>
<name>PP6R2_HUMAN</name>
<dbReference type="EMBL" id="AB014585">
    <property type="protein sequence ID" value="BAA31660.2"/>
    <property type="status" value="ALT_INIT"/>
    <property type="molecule type" value="mRNA"/>
</dbReference>
<dbReference type="EMBL" id="AK302472">
    <property type="protein sequence ID" value="BAH13719.1"/>
    <property type="molecule type" value="mRNA"/>
</dbReference>
<dbReference type="EMBL" id="AL096767">
    <property type="status" value="NOT_ANNOTATED_CDS"/>
    <property type="molecule type" value="Genomic_DNA"/>
</dbReference>
<dbReference type="EMBL" id="AL671545">
    <property type="status" value="NOT_ANNOTATED_CDS"/>
    <property type="molecule type" value="Genomic_DNA"/>
</dbReference>
<dbReference type="EMBL" id="AL954743">
    <property type="status" value="NOT_ANNOTATED_CDS"/>
    <property type="molecule type" value="Genomic_DNA"/>
</dbReference>
<dbReference type="EMBL" id="BC000976">
    <property type="protein sequence ID" value="AAH00976.2"/>
    <property type="molecule type" value="mRNA"/>
</dbReference>
<dbReference type="EMBL" id="BC006568">
    <property type="protein sequence ID" value="AAH06568.1"/>
    <property type="molecule type" value="mRNA"/>
</dbReference>
<dbReference type="EMBL" id="BC032664">
    <property type="protein sequence ID" value="AAH32664.1"/>
    <property type="molecule type" value="mRNA"/>
</dbReference>
<dbReference type="EMBL" id="BC041698">
    <property type="protein sequence ID" value="AAH41698.1"/>
    <property type="molecule type" value="mRNA"/>
</dbReference>
<dbReference type="EMBL" id="BC052995">
    <property type="protein sequence ID" value="AAH52995.1"/>
    <property type="molecule type" value="mRNA"/>
</dbReference>
<dbReference type="CCDS" id="CCDS33681.1">
    <molecule id="O75170-4"/>
</dbReference>
<dbReference type="CCDS" id="CCDS56235.1">
    <molecule id="O75170-3"/>
</dbReference>
<dbReference type="CCDS" id="CCDS56236.1">
    <molecule id="O75170-2"/>
</dbReference>
<dbReference type="CCDS" id="CCDS74881.1">
    <molecule id="O75170-5"/>
</dbReference>
<dbReference type="CCDS" id="CCDS93184.1">
    <molecule id="O75170-1"/>
</dbReference>
<dbReference type="PIR" id="T00357">
    <property type="entry name" value="T00357"/>
</dbReference>
<dbReference type="RefSeq" id="NP_001229827.1">
    <molecule id="O75170-5"/>
    <property type="nucleotide sequence ID" value="NM_001242898.2"/>
</dbReference>
<dbReference type="RefSeq" id="NP_001229828.1">
    <molecule id="O75170-3"/>
    <property type="nucleotide sequence ID" value="NM_001242899.2"/>
</dbReference>
<dbReference type="RefSeq" id="NP_001229829.1">
    <molecule id="O75170-2"/>
    <property type="nucleotide sequence ID" value="NM_001242900.2"/>
</dbReference>
<dbReference type="RefSeq" id="NP_001338572.1">
    <molecule id="O75170-5"/>
    <property type="nucleotide sequence ID" value="NM_001351643.2"/>
</dbReference>
<dbReference type="RefSeq" id="NP_001338574.1">
    <molecule id="O75170-4"/>
    <property type="nucleotide sequence ID" value="NM_001351645.2"/>
</dbReference>
<dbReference type="RefSeq" id="NP_001352765.1">
    <molecule id="O75170-1"/>
    <property type="nucleotide sequence ID" value="NM_001365836.1"/>
</dbReference>
<dbReference type="RefSeq" id="NP_055493.2">
    <molecule id="O75170-4"/>
    <property type="nucleotide sequence ID" value="NM_014678.4"/>
</dbReference>
<dbReference type="RefSeq" id="XP_006724497.1">
    <property type="nucleotide sequence ID" value="XM_006724434.1"/>
</dbReference>
<dbReference type="RefSeq" id="XP_016884612.1">
    <property type="nucleotide sequence ID" value="XM_017029123.1"/>
</dbReference>
<dbReference type="RefSeq" id="XP_016884613.1">
    <property type="nucleotide sequence ID" value="XM_017029124.1"/>
</dbReference>
<dbReference type="RefSeq" id="XP_016884617.1">
    <property type="nucleotide sequence ID" value="XM_017029128.1"/>
</dbReference>
<dbReference type="RefSeq" id="XP_016884620.1">
    <property type="nucleotide sequence ID" value="XM_017029131.1"/>
</dbReference>
<dbReference type="RefSeq" id="XP_016884621.1">
    <property type="nucleotide sequence ID" value="XM_017029132.1"/>
</dbReference>
<dbReference type="SMR" id="O75170"/>
<dbReference type="BioGRID" id="115053">
    <property type="interactions" value="131"/>
</dbReference>
<dbReference type="CORUM" id="O75170"/>
<dbReference type="DIP" id="DIP-27539N"/>
<dbReference type="FunCoup" id="O75170">
    <property type="interactions" value="3476"/>
</dbReference>
<dbReference type="IntAct" id="O75170">
    <property type="interactions" value="78"/>
</dbReference>
<dbReference type="MINT" id="O75170"/>
<dbReference type="STRING" id="9606.ENSP00000478417"/>
<dbReference type="ChEMBL" id="CHEMBL4105960"/>
<dbReference type="GlyCosmos" id="O75170">
    <property type="glycosylation" value="7 sites, 2 glycans"/>
</dbReference>
<dbReference type="GlyGen" id="O75170">
    <property type="glycosylation" value="9 sites, 2 O-linked glycans (7 sites)"/>
</dbReference>
<dbReference type="iPTMnet" id="O75170"/>
<dbReference type="PhosphoSitePlus" id="O75170"/>
<dbReference type="BioMuta" id="PPP6R2"/>
<dbReference type="jPOST" id="O75170"/>
<dbReference type="MassIVE" id="O75170"/>
<dbReference type="PaxDb" id="9606-ENSP00000478417"/>
<dbReference type="PeptideAtlas" id="O75170"/>
<dbReference type="ProteomicsDB" id="49835">
    <molecule id="O75170-1"/>
</dbReference>
<dbReference type="ProteomicsDB" id="49836">
    <molecule id="O75170-2"/>
</dbReference>
<dbReference type="ProteomicsDB" id="49837">
    <molecule id="O75170-3"/>
</dbReference>
<dbReference type="ProteomicsDB" id="49838">
    <molecule id="O75170-4"/>
</dbReference>
<dbReference type="ProteomicsDB" id="49839">
    <molecule id="O75170-5"/>
</dbReference>
<dbReference type="ProteomicsDB" id="49840">
    <molecule id="O75170-6"/>
</dbReference>
<dbReference type="Pumba" id="O75170"/>
<dbReference type="Antibodypedia" id="28539">
    <property type="antibodies" value="78 antibodies from 20 providers"/>
</dbReference>
<dbReference type="DNASU" id="9701"/>
<dbReference type="Ensembl" id="ENST00000216061.9">
    <molecule id="O75170-1"/>
    <property type="protein sequence ID" value="ENSP00000216061.5"/>
    <property type="gene ID" value="ENSG00000100239.16"/>
</dbReference>
<dbReference type="Ensembl" id="ENST00000359139.7">
    <molecule id="O75170-2"/>
    <property type="protein sequence ID" value="ENSP00000352051.3"/>
    <property type="gene ID" value="ENSG00000100239.16"/>
</dbReference>
<dbReference type="Ensembl" id="ENST00000395741.7">
    <molecule id="O75170-3"/>
    <property type="protein sequence ID" value="ENSP00000379090.3"/>
    <property type="gene ID" value="ENSG00000100239.16"/>
</dbReference>
<dbReference type="Ensembl" id="ENST00000395744.7">
    <molecule id="O75170-4"/>
    <property type="protein sequence ID" value="ENSP00000379093.3"/>
    <property type="gene ID" value="ENSG00000100239.16"/>
</dbReference>
<dbReference type="Ensembl" id="ENST00000612753.5">
    <molecule id="O75170-5"/>
    <property type="protein sequence ID" value="ENSP00000478417.1"/>
    <property type="gene ID" value="ENSG00000100239.16"/>
</dbReference>
<dbReference type="GeneID" id="9701"/>
<dbReference type="KEGG" id="hsa:9701"/>
<dbReference type="MANE-Select" id="ENST00000612753.5">
    <molecule id="O75170-5"/>
    <property type="protein sequence ID" value="ENSP00000478417.1"/>
    <property type="RefSeq nucleotide sequence ID" value="NM_001242898.2"/>
    <property type="RefSeq protein sequence ID" value="NP_001229827.1"/>
</dbReference>
<dbReference type="UCSC" id="uc003bky.3">
    <molecule id="O75170-1"/>
    <property type="organism name" value="human"/>
</dbReference>
<dbReference type="AGR" id="HGNC:19253"/>
<dbReference type="CTD" id="9701"/>
<dbReference type="DisGeNET" id="9701"/>
<dbReference type="GeneCards" id="PPP6R2"/>
<dbReference type="HGNC" id="HGNC:19253">
    <property type="gene designation" value="PPP6R2"/>
</dbReference>
<dbReference type="HPA" id="ENSG00000100239">
    <property type="expression patterns" value="Low tissue specificity"/>
</dbReference>
<dbReference type="MalaCards" id="PPP6R2"/>
<dbReference type="MIM" id="610877">
    <property type="type" value="gene"/>
</dbReference>
<dbReference type="neXtProt" id="NX_O75170"/>
<dbReference type="OpenTargets" id="ENSG00000100239"/>
<dbReference type="PharmGKB" id="PA165378360"/>
<dbReference type="VEuPathDB" id="HostDB:ENSG00000100239"/>
<dbReference type="eggNOG" id="KOG2073">
    <property type="taxonomic scope" value="Eukaryota"/>
</dbReference>
<dbReference type="GeneTree" id="ENSGT00390000009899"/>
<dbReference type="HOGENOM" id="CLU_012598_0_0_1"/>
<dbReference type="InParanoid" id="O75170"/>
<dbReference type="OMA" id="CCNERIR"/>
<dbReference type="OrthoDB" id="295029at2759"/>
<dbReference type="PAN-GO" id="O75170">
    <property type="GO annotations" value="4 GO annotations based on evolutionary models"/>
</dbReference>
<dbReference type="PhylomeDB" id="O75170"/>
<dbReference type="TreeFam" id="TF313227"/>
<dbReference type="PathwayCommons" id="O75170"/>
<dbReference type="SignaLink" id="O75170"/>
<dbReference type="SIGNOR" id="O75170"/>
<dbReference type="BioGRID-ORCS" id="9701">
    <property type="hits" value="10 hits in 1149 CRISPR screens"/>
</dbReference>
<dbReference type="ChiTaRS" id="PPP6R2">
    <property type="organism name" value="human"/>
</dbReference>
<dbReference type="GenomeRNAi" id="9701"/>
<dbReference type="Pharos" id="O75170">
    <property type="development level" value="Tbio"/>
</dbReference>
<dbReference type="PRO" id="PR:O75170"/>
<dbReference type="Proteomes" id="UP000005640">
    <property type="component" value="Chromosome 22"/>
</dbReference>
<dbReference type="RNAct" id="O75170">
    <property type="molecule type" value="protein"/>
</dbReference>
<dbReference type="Bgee" id="ENSG00000100239">
    <property type="expression patterns" value="Expressed in right hemisphere of cerebellum and 187 other cell types or tissues"/>
</dbReference>
<dbReference type="ExpressionAtlas" id="O75170">
    <property type="expression patterns" value="baseline and differential"/>
</dbReference>
<dbReference type="GO" id="GO:0036464">
    <property type="term" value="C:cytoplasmic ribonucleoprotein granule"/>
    <property type="evidence" value="ECO:0000314"/>
    <property type="project" value="HPA"/>
</dbReference>
<dbReference type="GO" id="GO:0005829">
    <property type="term" value="C:cytosol"/>
    <property type="evidence" value="ECO:0000314"/>
    <property type="project" value="HPA"/>
</dbReference>
<dbReference type="GO" id="GO:0005634">
    <property type="term" value="C:nucleus"/>
    <property type="evidence" value="ECO:0000318"/>
    <property type="project" value="GO_Central"/>
</dbReference>
<dbReference type="GO" id="GO:0019903">
    <property type="term" value="F:protein phosphatase binding"/>
    <property type="evidence" value="ECO:0007669"/>
    <property type="project" value="InterPro"/>
</dbReference>
<dbReference type="GO" id="GO:0019888">
    <property type="term" value="F:protein phosphatase regulator activity"/>
    <property type="evidence" value="ECO:0000314"/>
    <property type="project" value="MGI"/>
</dbReference>
<dbReference type="GO" id="GO:0009966">
    <property type="term" value="P:regulation of signal transduction"/>
    <property type="evidence" value="ECO:0000318"/>
    <property type="project" value="GO_Central"/>
</dbReference>
<dbReference type="Gene3D" id="1.25.10.10">
    <property type="entry name" value="Leucine-rich Repeat Variant"/>
    <property type="match status" value="1"/>
</dbReference>
<dbReference type="InterPro" id="IPR011989">
    <property type="entry name" value="ARM-like"/>
</dbReference>
<dbReference type="InterPro" id="IPR016024">
    <property type="entry name" value="ARM-type_fold"/>
</dbReference>
<dbReference type="InterPro" id="IPR007587">
    <property type="entry name" value="SAPS"/>
</dbReference>
<dbReference type="PANTHER" id="PTHR12634:SF15">
    <property type="entry name" value="SERINE_THREONINE-PROTEIN PHOSPHATASE 6 REGULATORY SUBUNIT 2"/>
    <property type="match status" value="1"/>
</dbReference>
<dbReference type="PANTHER" id="PTHR12634">
    <property type="entry name" value="SIT4 YEAST -ASSOCIATING PROTEIN-RELATED"/>
    <property type="match status" value="1"/>
</dbReference>
<dbReference type="Pfam" id="PF04499">
    <property type="entry name" value="SAPS"/>
    <property type="match status" value="2"/>
</dbReference>
<dbReference type="SUPFAM" id="SSF48371">
    <property type="entry name" value="ARM repeat"/>
    <property type="match status" value="1"/>
</dbReference>
<feature type="chain" id="PRO_0000046098" description="Serine/threonine-protein phosphatase 6 regulatory subunit 2">
    <location>
        <begin position="1"/>
        <end position="966"/>
    </location>
</feature>
<feature type="region of interest" description="Disordered" evidence="2">
    <location>
        <begin position="408"/>
        <end position="436"/>
    </location>
</feature>
<feature type="region of interest" description="Disordered" evidence="2">
    <location>
        <begin position="657"/>
        <end position="707"/>
    </location>
</feature>
<feature type="region of interest" description="Disordered" evidence="2">
    <location>
        <begin position="819"/>
        <end position="856"/>
    </location>
</feature>
<feature type="compositionally biased region" description="Basic and acidic residues" evidence="2">
    <location>
        <begin position="408"/>
        <end position="424"/>
    </location>
</feature>
<feature type="compositionally biased region" description="Basic and acidic residues" evidence="2">
    <location>
        <begin position="669"/>
        <end position="687"/>
    </location>
</feature>
<feature type="modified residue" description="Phosphoserine" evidence="9 10 11 12">
    <location>
        <position position="289"/>
    </location>
</feature>
<feature type="modified residue" description="Phosphoserine" evidence="1">
    <location>
        <position position="771"/>
    </location>
</feature>
<feature type="modified residue" description="Phosphoserine" evidence="11">
    <location>
        <position position="828"/>
    </location>
</feature>
<feature type="splice variant" id="VSP_037767" description="In isoform 6." evidence="6">
    <location>
        <begin position="58"/>
        <end position="84"/>
    </location>
</feature>
<feature type="splice variant" id="VSP_037768" description="In isoform 3." evidence="6">
    <original>S</original>
    <variation>SR</variation>
    <location>
        <position position="244"/>
    </location>
</feature>
<feature type="splice variant" id="VSP_030758" description="In isoform 2, isoform 3, isoform 4 and isoform 6." evidence="6 7">
    <location>
        <begin position="535"/>
        <end position="561"/>
    </location>
</feature>
<feature type="splice variant" id="VSP_030759" description="In isoform 2." evidence="7">
    <original>E</original>
    <variation>EA</variation>
    <location>
        <position position="709"/>
    </location>
</feature>
<feature type="splice variant" id="VSP_030760" description="In isoform 2, isoform 3, isoform 4, isoform 5 and isoform 6." evidence="5 6 7">
    <original>SQASYFAV</original>
    <variation>F</variation>
    <location>
        <begin position="792"/>
        <end position="799"/>
    </location>
</feature>
<feature type="splice variant" id="VSP_030761" description="In isoform 2." evidence="7">
    <original>KTDAPPEGAALNGPV</original>
    <variation>QMPRQKELP</variation>
    <location>
        <begin position="952"/>
        <end position="966"/>
    </location>
</feature>
<feature type="sequence variant" id="VAR_058402" description="In dbSNP:rs11555194.">
    <original>D</original>
    <variation>E</variation>
    <location>
        <position position="633"/>
    </location>
</feature>
<feature type="sequence variant" id="VAR_058403" description="In dbSNP:rs13057311.">
    <original>R</original>
    <variation>K</variation>
    <location>
        <position position="732"/>
    </location>
</feature>
<feature type="sequence conflict" description="In Ref. 2; BAH13719." evidence="8" ref="2">
    <original>D</original>
    <variation>G</variation>
    <location>
        <position position="224"/>
    </location>
</feature>
<feature type="sequence conflict" description="In Ref. 2; BAH13719." evidence="8" ref="2">
    <original>A</original>
    <variation>T</variation>
    <location>
        <position position="806"/>
    </location>
</feature>
<feature type="sequence conflict" description="In Ref. 4; AAH52995." evidence="8" ref="4">
    <original>Q</original>
    <variation>H</variation>
    <location>
        <position position="835"/>
    </location>
</feature>
<comment type="function">
    <text evidence="3">Regulatory subunit of protein phosphatase 6 (PP6). May function as a scaffolding PP6 subunit. Involved in the PP6-mediated dephosphorylation of NFKBIE opposing its degradation in response to TNF-alpha.</text>
</comment>
<comment type="subunit">
    <text evidence="3 4">Protein phosphatase 6 (PP6) holoenzyme is proposed to be a heterotrimeric complex formed by the catalytic subunit, a SAPS domain-containing subunit (PP6R) and an ankyrin repeat-domain containing regulatory subunit (ARS). Interacts with PPP6C and NFKBIE. Interacts with ANKRD28.</text>
</comment>
<comment type="interaction">
    <interactant intactId="EBI-359739">
        <id>O75170</id>
    </interactant>
    <interactant intactId="EBI-359567">
        <id>O15084</id>
        <label>ANKRD28</label>
    </interactant>
    <organismsDiffer>false</organismsDiffer>
    <experiments>9</experiments>
</comment>
<comment type="interaction">
    <interactant intactId="EBI-359739">
        <id>O75170</id>
    </interactant>
    <interactant intactId="EBI-355098">
        <id>O00221</id>
        <label>NFKBIE</label>
    </interactant>
    <organismsDiffer>false</organismsDiffer>
    <experiments>2</experiments>
</comment>
<comment type="interaction">
    <interactant intactId="EBI-359739">
        <id>O75170</id>
    </interactant>
    <interactant intactId="EBI-359751">
        <id>O00743</id>
        <label>PPP6C</label>
    </interactant>
    <organismsDiffer>false</organismsDiffer>
    <experiments>11</experiments>
</comment>
<comment type="interaction">
    <interactant intactId="EBI-11079164">
        <id>O75170-4</id>
    </interactant>
    <interactant intactId="EBI-466029">
        <id>P42858</id>
        <label>HTT</label>
    </interactant>
    <organismsDiffer>false</organismsDiffer>
    <experiments>3</experiments>
</comment>
<comment type="subcellular location">
    <subcellularLocation>
        <location evidence="3">Cytoplasm</location>
    </subcellularLocation>
</comment>
<comment type="alternative products">
    <event type="alternative splicing"/>
    <isoform>
        <id>O75170-1</id>
        <name>1</name>
        <sequence type="displayed"/>
    </isoform>
    <isoform>
        <id>O75170-2</id>
        <name>2</name>
        <sequence type="described" ref="VSP_030758 VSP_030759 VSP_030760 VSP_030761"/>
    </isoform>
    <isoform>
        <id>O75170-3</id>
        <name>3</name>
        <sequence type="described" ref="VSP_037768 VSP_030758 VSP_030760"/>
    </isoform>
    <isoform>
        <id>O75170-4</id>
        <name>4</name>
        <sequence type="described" ref="VSP_030758 VSP_030760"/>
    </isoform>
    <isoform>
        <id>O75170-5</id>
        <name>5</name>
        <sequence type="described" ref="VSP_030760"/>
    </isoform>
    <isoform>
        <id>O75170-6</id>
        <name>6</name>
        <sequence type="described" ref="VSP_037767 VSP_030758 VSP_030760"/>
    </isoform>
</comment>
<comment type="tissue specificity">
    <text evidence="3">Ubiquitously expressed with strongest expression in the testis followed by liver, heart, kidney, brain and placenta.</text>
</comment>
<comment type="similarity">
    <text evidence="8">Belongs to the SAPS family.</text>
</comment>
<comment type="sequence caution" evidence="8">
    <conflict type="erroneous initiation">
        <sequence resource="EMBL-CDS" id="BAA31660"/>
    </conflict>
    <text>Truncated N-terminus.</text>
</comment>
<sequence>MFWKFDLNTTSHVDKLLDKEHVTLQELMDEDDILQECKAQNQKLLDFLCRQQCMEELVSLITQDPPLDMEEKVRFKYPNTACELLTCDVPQISDRLGGDESLLSLLYDFLDHEPPLNPLLASFFSKTIGNLIARKTEQVITFLKKKDKFISLVLKHIGTSALMDLLLRLVSCVEPAGLRQDVLHWLNEEKVIQRLVELIHPSQDEDRQSNASQTLCDIVRLGRDQGSQLQEALEPDPLLTALESQDCVEQLLKNMFDGDRTESCLVSGTQVLLTLLETRRVGTEGLVDSFSQGLERSYAVSSSVLHGIEPRLKDFHQLLLNPPKKKAILTTIGVLEEPLGNARLHGARLMAALLHTNTPSINQELCRLNTMDLLLDLFFKYTWNNFLHFQVELCIAAILSHAAREERTEASGSESRVEPPHENGNRSLETPQPAASLPDNTMVTHLFQKCCLVQRILEAWEANDHTQAAGGMRRGNMGHLTRIANAVVQNLERGPVQTHISEVIRGLPADCRGRWESFVEETLTETNRRNTVDLVSTHHLHSSSEDEDIEGAFPNELSLQQAFSDYQIQQMTANFVDQFGFNDEEFADQDDNINAPFDRIAEINFNIDADEDSPSAALFEACCSDRIQPFDDDEDEDIWEDSDTRCAARVMARPRFGAPHASESCSKNGPERGGQDGKASLEAHRDAPGAGAPPAPGKKEAPPVEGDSEGAMWTAVFDEPANSTPTAPGVVRDVGSSVWAAGTSAPEEKGWAKFTDFQPFCCSESGPRCSSPVDTECSHAEGSRSQGPEKASQASYFAVSPASPCAWNVCVTRKAPLLASDSSSSGGSHSEDGDQKAASAMDAVSRGPGREAPPLPTVARTEEAVGRVGCADSRLLSPACPAPKEVTAAPAVAVPPEATVAITTALSKAGPAIPTPAVSSALAVAVPLGPIMAVTAAPAMVATLGTVTKDGKTDAPPEGAALNGPV</sequence>
<organism>
    <name type="scientific">Homo sapiens</name>
    <name type="common">Human</name>
    <dbReference type="NCBI Taxonomy" id="9606"/>
    <lineage>
        <taxon>Eukaryota</taxon>
        <taxon>Metazoa</taxon>
        <taxon>Chordata</taxon>
        <taxon>Craniata</taxon>
        <taxon>Vertebrata</taxon>
        <taxon>Euteleostomi</taxon>
        <taxon>Mammalia</taxon>
        <taxon>Eutheria</taxon>
        <taxon>Euarchontoglires</taxon>
        <taxon>Primates</taxon>
        <taxon>Haplorrhini</taxon>
        <taxon>Catarrhini</taxon>
        <taxon>Hominidae</taxon>
        <taxon>Homo</taxon>
    </lineage>
</organism>
<protein>
    <recommendedName>
        <fullName>Serine/threonine-protein phosphatase 6 regulatory subunit 2</fullName>
    </recommendedName>
    <alternativeName>
        <fullName>SAPS domain family member 2</fullName>
    </alternativeName>
</protein>
<keyword id="KW-0025">Alternative splicing</keyword>
<keyword id="KW-0963">Cytoplasm</keyword>
<keyword id="KW-0597">Phosphoprotein</keyword>
<keyword id="KW-1267">Proteomics identification</keyword>
<keyword id="KW-1185">Reference proteome</keyword>
<accession>O75170</accession>
<accession>A6PVG3</accession>
<accession>B7Z7T3</accession>
<accession>Q5U5P3</accession>
<accession>Q7Z2L2</accession>
<accession>Q7Z5G5</accession>
<accession>Q7Z731</accession>
<accession>Q9UGB9</accession>
<reference key="1">
    <citation type="journal article" date="1998" name="DNA Res.">
        <title>Prediction of the coding sequences of unidentified human genes. X. The complete sequences of 100 new cDNA clones from brain which can code for large proteins in vitro.</title>
        <authorList>
            <person name="Ishikawa K."/>
            <person name="Nagase T."/>
            <person name="Suyama M."/>
            <person name="Miyajima N."/>
            <person name="Tanaka A."/>
            <person name="Kotani H."/>
            <person name="Nomura N."/>
            <person name="Ohara O."/>
        </authorList>
    </citation>
    <scope>NUCLEOTIDE SEQUENCE [LARGE SCALE MRNA] (ISOFORM 2)</scope>
    <source>
        <tissue>Brain</tissue>
    </source>
</reference>
<reference key="2">
    <citation type="journal article" date="2004" name="Nat. Genet.">
        <title>Complete sequencing and characterization of 21,243 full-length human cDNAs.</title>
        <authorList>
            <person name="Ota T."/>
            <person name="Suzuki Y."/>
            <person name="Nishikawa T."/>
            <person name="Otsuki T."/>
            <person name="Sugiyama T."/>
            <person name="Irie R."/>
            <person name="Wakamatsu A."/>
            <person name="Hayashi K."/>
            <person name="Sato H."/>
            <person name="Nagai K."/>
            <person name="Kimura K."/>
            <person name="Makita H."/>
            <person name="Sekine M."/>
            <person name="Obayashi M."/>
            <person name="Nishi T."/>
            <person name="Shibahara T."/>
            <person name="Tanaka T."/>
            <person name="Ishii S."/>
            <person name="Yamamoto J."/>
            <person name="Saito K."/>
            <person name="Kawai Y."/>
            <person name="Isono Y."/>
            <person name="Nakamura Y."/>
            <person name="Nagahari K."/>
            <person name="Murakami K."/>
            <person name="Yasuda T."/>
            <person name="Iwayanagi T."/>
            <person name="Wagatsuma M."/>
            <person name="Shiratori A."/>
            <person name="Sudo H."/>
            <person name="Hosoiri T."/>
            <person name="Kaku Y."/>
            <person name="Kodaira H."/>
            <person name="Kondo H."/>
            <person name="Sugawara M."/>
            <person name="Takahashi M."/>
            <person name="Kanda K."/>
            <person name="Yokoi T."/>
            <person name="Furuya T."/>
            <person name="Kikkawa E."/>
            <person name="Omura Y."/>
            <person name="Abe K."/>
            <person name="Kamihara K."/>
            <person name="Katsuta N."/>
            <person name="Sato K."/>
            <person name="Tanikawa M."/>
            <person name="Yamazaki M."/>
            <person name="Ninomiya K."/>
            <person name="Ishibashi T."/>
            <person name="Yamashita H."/>
            <person name="Murakawa K."/>
            <person name="Fujimori K."/>
            <person name="Tanai H."/>
            <person name="Kimata M."/>
            <person name="Watanabe M."/>
            <person name="Hiraoka S."/>
            <person name="Chiba Y."/>
            <person name="Ishida S."/>
            <person name="Ono Y."/>
            <person name="Takiguchi S."/>
            <person name="Watanabe S."/>
            <person name="Yosida M."/>
            <person name="Hotuta T."/>
            <person name="Kusano J."/>
            <person name="Kanehori K."/>
            <person name="Takahashi-Fujii A."/>
            <person name="Hara H."/>
            <person name="Tanase T.-O."/>
            <person name="Nomura Y."/>
            <person name="Togiya S."/>
            <person name="Komai F."/>
            <person name="Hara R."/>
            <person name="Takeuchi K."/>
            <person name="Arita M."/>
            <person name="Imose N."/>
            <person name="Musashino K."/>
            <person name="Yuuki H."/>
            <person name="Oshima A."/>
            <person name="Sasaki N."/>
            <person name="Aotsuka S."/>
            <person name="Yoshikawa Y."/>
            <person name="Matsunawa H."/>
            <person name="Ichihara T."/>
            <person name="Shiohata N."/>
            <person name="Sano S."/>
            <person name="Moriya S."/>
            <person name="Momiyama H."/>
            <person name="Satoh N."/>
            <person name="Takami S."/>
            <person name="Terashima Y."/>
            <person name="Suzuki O."/>
            <person name="Nakagawa S."/>
            <person name="Senoh A."/>
            <person name="Mizoguchi H."/>
            <person name="Goto Y."/>
            <person name="Shimizu F."/>
            <person name="Wakebe H."/>
            <person name="Hishigaki H."/>
            <person name="Watanabe T."/>
            <person name="Sugiyama A."/>
            <person name="Takemoto M."/>
            <person name="Kawakami B."/>
            <person name="Yamazaki M."/>
            <person name="Watanabe K."/>
            <person name="Kumagai A."/>
            <person name="Itakura S."/>
            <person name="Fukuzumi Y."/>
            <person name="Fujimori Y."/>
            <person name="Komiyama M."/>
            <person name="Tashiro H."/>
            <person name="Tanigami A."/>
            <person name="Fujiwara T."/>
            <person name="Ono T."/>
            <person name="Yamada K."/>
            <person name="Fujii Y."/>
            <person name="Ozaki K."/>
            <person name="Hirao M."/>
            <person name="Ohmori Y."/>
            <person name="Kawabata A."/>
            <person name="Hikiji T."/>
            <person name="Kobatake N."/>
            <person name="Inagaki H."/>
            <person name="Ikema Y."/>
            <person name="Okamoto S."/>
            <person name="Okitani R."/>
            <person name="Kawakami T."/>
            <person name="Noguchi S."/>
            <person name="Itoh T."/>
            <person name="Shigeta K."/>
            <person name="Senba T."/>
            <person name="Matsumura K."/>
            <person name="Nakajima Y."/>
            <person name="Mizuno T."/>
            <person name="Morinaga M."/>
            <person name="Sasaki M."/>
            <person name="Togashi T."/>
            <person name="Oyama M."/>
            <person name="Hata H."/>
            <person name="Watanabe M."/>
            <person name="Komatsu T."/>
            <person name="Mizushima-Sugano J."/>
            <person name="Satoh T."/>
            <person name="Shirai Y."/>
            <person name="Takahashi Y."/>
            <person name="Nakagawa K."/>
            <person name="Okumura K."/>
            <person name="Nagase T."/>
            <person name="Nomura N."/>
            <person name="Kikuchi H."/>
            <person name="Masuho Y."/>
            <person name="Yamashita R."/>
            <person name="Nakai K."/>
            <person name="Yada T."/>
            <person name="Nakamura Y."/>
            <person name="Ohara O."/>
            <person name="Isogai T."/>
            <person name="Sugano S."/>
        </authorList>
    </citation>
    <scope>NUCLEOTIDE SEQUENCE [LARGE SCALE MRNA] (ISOFORM 5)</scope>
    <source>
        <tissue>Testis</tissue>
    </source>
</reference>
<reference key="3">
    <citation type="journal article" date="1999" name="Nature">
        <title>The DNA sequence of human chromosome 22.</title>
        <authorList>
            <person name="Dunham I."/>
            <person name="Hunt A.R."/>
            <person name="Collins J.E."/>
            <person name="Bruskiewich R."/>
            <person name="Beare D.M."/>
            <person name="Clamp M."/>
            <person name="Smink L.J."/>
            <person name="Ainscough R."/>
            <person name="Almeida J.P."/>
            <person name="Babbage A.K."/>
            <person name="Bagguley C."/>
            <person name="Bailey J."/>
            <person name="Barlow K.F."/>
            <person name="Bates K.N."/>
            <person name="Beasley O.P."/>
            <person name="Bird C.P."/>
            <person name="Blakey S.E."/>
            <person name="Bridgeman A.M."/>
            <person name="Buck D."/>
            <person name="Burgess J."/>
            <person name="Burrill W.D."/>
            <person name="Burton J."/>
            <person name="Carder C."/>
            <person name="Carter N.P."/>
            <person name="Chen Y."/>
            <person name="Clark G."/>
            <person name="Clegg S.M."/>
            <person name="Cobley V.E."/>
            <person name="Cole C.G."/>
            <person name="Collier R.E."/>
            <person name="Connor R."/>
            <person name="Conroy D."/>
            <person name="Corby N.R."/>
            <person name="Coville G.J."/>
            <person name="Cox A.V."/>
            <person name="Davis J."/>
            <person name="Dawson E."/>
            <person name="Dhami P.D."/>
            <person name="Dockree C."/>
            <person name="Dodsworth S.J."/>
            <person name="Durbin R.M."/>
            <person name="Ellington A.G."/>
            <person name="Evans K.L."/>
            <person name="Fey J.M."/>
            <person name="Fleming K."/>
            <person name="French L."/>
            <person name="Garner A.A."/>
            <person name="Gilbert J.G.R."/>
            <person name="Goward M.E."/>
            <person name="Grafham D.V."/>
            <person name="Griffiths M.N.D."/>
            <person name="Hall C."/>
            <person name="Hall R.E."/>
            <person name="Hall-Tamlyn G."/>
            <person name="Heathcott R.W."/>
            <person name="Ho S."/>
            <person name="Holmes S."/>
            <person name="Hunt S.E."/>
            <person name="Jones M.C."/>
            <person name="Kershaw J."/>
            <person name="Kimberley A.M."/>
            <person name="King A."/>
            <person name="Laird G.K."/>
            <person name="Langford C.F."/>
            <person name="Leversha M.A."/>
            <person name="Lloyd C."/>
            <person name="Lloyd D.M."/>
            <person name="Martyn I.D."/>
            <person name="Mashreghi-Mohammadi M."/>
            <person name="Matthews L.H."/>
            <person name="Mccann O.T."/>
            <person name="Mcclay J."/>
            <person name="Mclaren S."/>
            <person name="McMurray A.A."/>
            <person name="Milne S.A."/>
            <person name="Mortimore B.J."/>
            <person name="Odell C.N."/>
            <person name="Pavitt R."/>
            <person name="Pearce A.V."/>
            <person name="Pearson D."/>
            <person name="Phillimore B.J.C.T."/>
            <person name="Phillips S.H."/>
            <person name="Plumb R.W."/>
            <person name="Ramsay H."/>
            <person name="Ramsey Y."/>
            <person name="Rogers L."/>
            <person name="Ross M.T."/>
            <person name="Scott C.E."/>
            <person name="Sehra H.K."/>
            <person name="Skuce C.D."/>
            <person name="Smalley S."/>
            <person name="Smith M.L."/>
            <person name="Soderlund C."/>
            <person name="Spragon L."/>
            <person name="Steward C.A."/>
            <person name="Sulston J.E."/>
            <person name="Swann R.M."/>
            <person name="Vaudin M."/>
            <person name="Wall M."/>
            <person name="Wallis J.M."/>
            <person name="Whiteley M.N."/>
            <person name="Willey D.L."/>
            <person name="Williams L."/>
            <person name="Williams S.A."/>
            <person name="Williamson H."/>
            <person name="Wilmer T.E."/>
            <person name="Wilming L."/>
            <person name="Wright C.L."/>
            <person name="Hubbard T."/>
            <person name="Bentley D.R."/>
            <person name="Beck S."/>
            <person name="Rogers J."/>
            <person name="Shimizu N."/>
            <person name="Minoshima S."/>
            <person name="Kawasaki K."/>
            <person name="Sasaki T."/>
            <person name="Asakawa S."/>
            <person name="Kudoh J."/>
            <person name="Shintani A."/>
            <person name="Shibuya K."/>
            <person name="Yoshizaki Y."/>
            <person name="Aoki N."/>
            <person name="Mitsuyama S."/>
            <person name="Roe B.A."/>
            <person name="Chen F."/>
            <person name="Chu L."/>
            <person name="Crabtree J."/>
            <person name="Deschamps S."/>
            <person name="Do A."/>
            <person name="Do T."/>
            <person name="Dorman A."/>
            <person name="Fang F."/>
            <person name="Fu Y."/>
            <person name="Hu P."/>
            <person name="Hua A."/>
            <person name="Kenton S."/>
            <person name="Lai H."/>
            <person name="Lao H.I."/>
            <person name="Lewis J."/>
            <person name="Lewis S."/>
            <person name="Lin S.-P."/>
            <person name="Loh P."/>
            <person name="Malaj E."/>
            <person name="Nguyen T."/>
            <person name="Pan H."/>
            <person name="Phan S."/>
            <person name="Qi S."/>
            <person name="Qian Y."/>
            <person name="Ray L."/>
            <person name="Ren Q."/>
            <person name="Shaull S."/>
            <person name="Sloan D."/>
            <person name="Song L."/>
            <person name="Wang Q."/>
            <person name="Wang Y."/>
            <person name="Wang Z."/>
            <person name="White J."/>
            <person name="Willingham D."/>
            <person name="Wu H."/>
            <person name="Yao Z."/>
            <person name="Zhan M."/>
            <person name="Zhang G."/>
            <person name="Chissoe S."/>
            <person name="Murray J."/>
            <person name="Miller N."/>
            <person name="Minx P."/>
            <person name="Fulton R."/>
            <person name="Johnson D."/>
            <person name="Bemis G."/>
            <person name="Bentley D."/>
            <person name="Bradshaw H."/>
            <person name="Bourne S."/>
            <person name="Cordes M."/>
            <person name="Du Z."/>
            <person name="Fulton L."/>
            <person name="Goela D."/>
            <person name="Graves T."/>
            <person name="Hawkins J."/>
            <person name="Hinds K."/>
            <person name="Kemp K."/>
            <person name="Latreille P."/>
            <person name="Layman D."/>
            <person name="Ozersky P."/>
            <person name="Rohlfing T."/>
            <person name="Scheet P."/>
            <person name="Walker C."/>
            <person name="Wamsley A."/>
            <person name="Wohldmann P."/>
            <person name="Pepin K."/>
            <person name="Nelson J."/>
            <person name="Korf I."/>
            <person name="Bedell J.A."/>
            <person name="Hillier L.W."/>
            <person name="Mardis E."/>
            <person name="Waterston R."/>
            <person name="Wilson R."/>
            <person name="Emanuel B.S."/>
            <person name="Shaikh T."/>
            <person name="Kurahashi H."/>
            <person name="Saitta S."/>
            <person name="Budarf M.L."/>
            <person name="McDermid H.E."/>
            <person name="Johnson A."/>
            <person name="Wong A.C.C."/>
            <person name="Morrow B.E."/>
            <person name="Edelmann L."/>
            <person name="Kim U.J."/>
            <person name="Shizuya H."/>
            <person name="Simon M.I."/>
            <person name="Dumanski J.P."/>
            <person name="Peyrard M."/>
            <person name="Kedra D."/>
            <person name="Seroussi E."/>
            <person name="Fransson I."/>
            <person name="Tapia I."/>
            <person name="Bruder C.E."/>
            <person name="O'Brien K.P."/>
            <person name="Wilkinson P."/>
            <person name="Bodenteich A."/>
            <person name="Hartman K."/>
            <person name="Hu X."/>
            <person name="Khan A.S."/>
            <person name="Lane L."/>
            <person name="Tilahun Y."/>
            <person name="Wright H."/>
        </authorList>
    </citation>
    <scope>NUCLEOTIDE SEQUENCE [LARGE SCALE GENOMIC DNA]</scope>
</reference>
<reference key="4">
    <citation type="journal article" date="2004" name="Genome Res.">
        <title>The status, quality, and expansion of the NIH full-length cDNA project: the Mammalian Gene Collection (MGC).</title>
        <authorList>
            <consortium name="The MGC Project Team"/>
        </authorList>
    </citation>
    <scope>NUCLEOTIDE SEQUENCE [LARGE SCALE MRNA] (ISOFORMS 1; 3; 4 AND 6)</scope>
    <source>
        <tissue>Brain</tissue>
        <tissue>Lymph</tissue>
        <tissue>Muscle</tissue>
        <tissue>Placenta</tissue>
        <tissue>Skin</tissue>
    </source>
</reference>
<reference key="5">
    <citation type="journal article" date="2006" name="J. Biol. Chem.">
        <title>Protein phosphatase 6 subunit with conserved Sit4-associated protein domain targets IkappaBepsilon.</title>
        <authorList>
            <person name="Stefansson B."/>
            <person name="Brautigan D.L."/>
        </authorList>
    </citation>
    <scope>FUNCTION</scope>
    <scope>INTERACTION WITH PPP6C AND NFKBIE</scope>
    <scope>SUBCELLULAR LOCATION</scope>
    <scope>TISSUE SPECIFICITY</scope>
</reference>
<reference key="6">
    <citation type="journal article" date="2008" name="Biochemistry">
        <title>Protein phosphatase 6 regulatory subunits composed of ankyrin repeat domains.</title>
        <authorList>
            <person name="Stefansson B."/>
            <person name="Ohama T."/>
            <person name="Daugherty A.E."/>
            <person name="Brautigan D.L."/>
        </authorList>
    </citation>
    <scope>INTERACTION WITH PPP6C AND ANKRD28</scope>
</reference>
<reference key="7">
    <citation type="journal article" date="2008" name="Mol. Cell">
        <title>Kinase-selective enrichment enables quantitative phosphoproteomics of the kinome across the cell cycle.</title>
        <authorList>
            <person name="Daub H."/>
            <person name="Olsen J.V."/>
            <person name="Bairlein M."/>
            <person name="Gnad F."/>
            <person name="Oppermann F.S."/>
            <person name="Korner R."/>
            <person name="Greff Z."/>
            <person name="Keri G."/>
            <person name="Stemmann O."/>
            <person name="Mann M."/>
        </authorList>
    </citation>
    <scope>IDENTIFICATION BY MASS SPECTROMETRY [LARGE SCALE ANALYSIS]</scope>
    <source>
        <tissue>Cervix carcinoma</tissue>
    </source>
</reference>
<reference key="8">
    <citation type="journal article" date="2008" name="Proc. Natl. Acad. Sci. U.S.A.">
        <title>A quantitative atlas of mitotic phosphorylation.</title>
        <authorList>
            <person name="Dephoure N."/>
            <person name="Zhou C."/>
            <person name="Villen J."/>
            <person name="Beausoleil S.A."/>
            <person name="Bakalarski C.E."/>
            <person name="Elledge S.J."/>
            <person name="Gygi S.P."/>
        </authorList>
    </citation>
    <scope>PHOSPHORYLATION [LARGE SCALE ANALYSIS] AT SER-289</scope>
    <scope>IDENTIFICATION BY MASS SPECTROMETRY [LARGE SCALE ANALYSIS]</scope>
    <source>
        <tissue>Cervix carcinoma</tissue>
    </source>
</reference>
<reference key="9">
    <citation type="journal article" date="2009" name="Mol. Cell. Proteomics">
        <title>Large-scale proteomics analysis of the human kinome.</title>
        <authorList>
            <person name="Oppermann F.S."/>
            <person name="Gnad F."/>
            <person name="Olsen J.V."/>
            <person name="Hornberger R."/>
            <person name="Greff Z."/>
            <person name="Keri G."/>
            <person name="Mann M."/>
            <person name="Daub H."/>
        </authorList>
    </citation>
    <scope>IDENTIFICATION BY MASS SPECTROMETRY [LARGE SCALE ANALYSIS]</scope>
</reference>
<reference key="10">
    <citation type="journal article" date="2009" name="Sci. Signal.">
        <title>Quantitative phosphoproteomic analysis of T cell receptor signaling reveals system-wide modulation of protein-protein interactions.</title>
        <authorList>
            <person name="Mayya V."/>
            <person name="Lundgren D.H."/>
            <person name="Hwang S.-I."/>
            <person name="Rezaul K."/>
            <person name="Wu L."/>
            <person name="Eng J.K."/>
            <person name="Rodionov V."/>
            <person name="Han D.K."/>
        </authorList>
    </citation>
    <scope>PHOSPHORYLATION [LARGE SCALE ANALYSIS] AT SER-289</scope>
    <scope>IDENTIFICATION BY MASS SPECTROMETRY [LARGE SCALE ANALYSIS]</scope>
    <source>
        <tissue>Leukemic T-cell</tissue>
    </source>
</reference>
<reference key="11">
    <citation type="journal article" date="2011" name="BMC Syst. Biol.">
        <title>Initial characterization of the human central proteome.</title>
        <authorList>
            <person name="Burkard T.R."/>
            <person name="Planyavsky M."/>
            <person name="Kaupe I."/>
            <person name="Breitwieser F.P."/>
            <person name="Buerckstuemmer T."/>
            <person name="Bennett K.L."/>
            <person name="Superti-Furga G."/>
            <person name="Colinge J."/>
        </authorList>
    </citation>
    <scope>IDENTIFICATION BY MASS SPECTROMETRY [LARGE SCALE ANALYSIS]</scope>
</reference>
<reference key="12">
    <citation type="journal article" date="2013" name="J. Proteome Res.">
        <title>Toward a comprehensive characterization of a human cancer cell phosphoproteome.</title>
        <authorList>
            <person name="Zhou H."/>
            <person name="Di Palma S."/>
            <person name="Preisinger C."/>
            <person name="Peng M."/>
            <person name="Polat A.N."/>
            <person name="Heck A.J."/>
            <person name="Mohammed S."/>
        </authorList>
    </citation>
    <scope>PHOSPHORYLATION [LARGE SCALE ANALYSIS] AT SER-289 AND SER-828</scope>
    <scope>IDENTIFICATION BY MASS SPECTROMETRY [LARGE SCALE ANALYSIS]</scope>
    <source>
        <tissue>Cervix carcinoma</tissue>
        <tissue>Erythroleukemia</tissue>
    </source>
</reference>
<reference key="13">
    <citation type="journal article" date="2014" name="J. Proteomics">
        <title>An enzyme assisted RP-RPLC approach for in-depth analysis of human liver phosphoproteome.</title>
        <authorList>
            <person name="Bian Y."/>
            <person name="Song C."/>
            <person name="Cheng K."/>
            <person name="Dong M."/>
            <person name="Wang F."/>
            <person name="Huang J."/>
            <person name="Sun D."/>
            <person name="Wang L."/>
            <person name="Ye M."/>
            <person name="Zou H."/>
        </authorList>
    </citation>
    <scope>PHOSPHORYLATION [LARGE SCALE ANALYSIS] AT SER-289</scope>
    <scope>IDENTIFICATION BY MASS SPECTROMETRY [LARGE SCALE ANALYSIS]</scope>
    <source>
        <tissue>Liver</tissue>
    </source>
</reference>